<dbReference type="EC" id="3.6.1.41" evidence="1"/>
<dbReference type="EMBL" id="BX936398">
    <property type="protein sequence ID" value="CAH19871.1"/>
    <property type="molecule type" value="Genomic_DNA"/>
</dbReference>
<dbReference type="RefSeq" id="WP_011191708.1">
    <property type="nucleotide sequence ID" value="NC_006155.1"/>
</dbReference>
<dbReference type="SMR" id="Q66ER0"/>
<dbReference type="GeneID" id="49787366"/>
<dbReference type="KEGG" id="ypo:BZ17_1926"/>
<dbReference type="KEGG" id="yps:YPTB0631"/>
<dbReference type="PATRIC" id="fig|273123.14.peg.2046"/>
<dbReference type="Proteomes" id="UP000001011">
    <property type="component" value="Chromosome"/>
</dbReference>
<dbReference type="GO" id="GO:0008803">
    <property type="term" value="F:bis(5'-nucleosyl)-tetraphosphatase (symmetrical) activity"/>
    <property type="evidence" value="ECO:0007669"/>
    <property type="project" value="UniProtKB-UniRule"/>
</dbReference>
<dbReference type="CDD" id="cd07422">
    <property type="entry name" value="MPP_ApaH"/>
    <property type="match status" value="1"/>
</dbReference>
<dbReference type="FunFam" id="3.60.21.10:FF:000013">
    <property type="entry name" value="Bis(5'-nucleosyl)-tetraphosphatase, symmetrical"/>
    <property type="match status" value="1"/>
</dbReference>
<dbReference type="Gene3D" id="3.60.21.10">
    <property type="match status" value="1"/>
</dbReference>
<dbReference type="HAMAP" id="MF_00199">
    <property type="entry name" value="ApaH"/>
    <property type="match status" value="1"/>
</dbReference>
<dbReference type="InterPro" id="IPR004617">
    <property type="entry name" value="ApaH"/>
</dbReference>
<dbReference type="InterPro" id="IPR004843">
    <property type="entry name" value="Calcineurin-like_PHP_ApaH"/>
</dbReference>
<dbReference type="InterPro" id="IPR029052">
    <property type="entry name" value="Metallo-depent_PP-like"/>
</dbReference>
<dbReference type="NCBIfam" id="TIGR00668">
    <property type="entry name" value="apaH"/>
    <property type="match status" value="1"/>
</dbReference>
<dbReference type="NCBIfam" id="NF001204">
    <property type="entry name" value="PRK00166.1"/>
    <property type="match status" value="1"/>
</dbReference>
<dbReference type="PANTHER" id="PTHR40942">
    <property type="match status" value="1"/>
</dbReference>
<dbReference type="PANTHER" id="PTHR40942:SF4">
    <property type="entry name" value="CYTOCHROME C5"/>
    <property type="match status" value="1"/>
</dbReference>
<dbReference type="Pfam" id="PF00149">
    <property type="entry name" value="Metallophos"/>
    <property type="match status" value="1"/>
</dbReference>
<dbReference type="PIRSF" id="PIRSF000903">
    <property type="entry name" value="B5n-ttraPtase_sm"/>
    <property type="match status" value="1"/>
</dbReference>
<dbReference type="SUPFAM" id="SSF56300">
    <property type="entry name" value="Metallo-dependent phosphatases"/>
    <property type="match status" value="1"/>
</dbReference>
<proteinExistence type="inferred from homology"/>
<gene>
    <name evidence="1" type="primary">apaH</name>
    <name type="ordered locus">YPTB0631</name>
</gene>
<keyword id="KW-0378">Hydrolase</keyword>
<name>APAH_YERPS</name>
<sequence>MSTYLIGDIHGCLDELLALLAQVNFDPQQDTLWLTGDLVARGPASLDVLRYVRSLGPAVRMVLGNHDLHLLAVYAGISRNKPKDRITPLLDAPDADELINWLRRQPVLQVDDQLKLIMAHAGITPQWDIETAKMCAREVEAVLSSDSYPLFLDAMYGDMPNNWSPELTGLARLRFSTNALTRMRFCFPNGQLDMICKDTPENAPAPLKPWFDLPRLVDPEYSIIFGHWASLEGKGVPEGIYGLDTGCCWGGDLTLLRWEDKRYFTQRAFKAEAEINNNNGFAAGEEVQH</sequence>
<organism>
    <name type="scientific">Yersinia pseudotuberculosis serotype I (strain IP32953)</name>
    <dbReference type="NCBI Taxonomy" id="273123"/>
    <lineage>
        <taxon>Bacteria</taxon>
        <taxon>Pseudomonadati</taxon>
        <taxon>Pseudomonadota</taxon>
        <taxon>Gammaproteobacteria</taxon>
        <taxon>Enterobacterales</taxon>
        <taxon>Yersiniaceae</taxon>
        <taxon>Yersinia</taxon>
    </lineage>
</organism>
<reference key="1">
    <citation type="journal article" date="2004" name="Proc. Natl. Acad. Sci. U.S.A.">
        <title>Insights into the evolution of Yersinia pestis through whole-genome comparison with Yersinia pseudotuberculosis.</title>
        <authorList>
            <person name="Chain P.S.G."/>
            <person name="Carniel E."/>
            <person name="Larimer F.W."/>
            <person name="Lamerdin J."/>
            <person name="Stoutland P.O."/>
            <person name="Regala W.M."/>
            <person name="Georgescu A.M."/>
            <person name="Vergez L.M."/>
            <person name="Land M.L."/>
            <person name="Motin V.L."/>
            <person name="Brubaker R.R."/>
            <person name="Fowler J."/>
            <person name="Hinnebusch J."/>
            <person name="Marceau M."/>
            <person name="Medigue C."/>
            <person name="Simonet M."/>
            <person name="Chenal-Francisque V."/>
            <person name="Souza B."/>
            <person name="Dacheux D."/>
            <person name="Elliott J.M."/>
            <person name="Derbise A."/>
            <person name="Hauser L.J."/>
            <person name="Garcia E."/>
        </authorList>
    </citation>
    <scope>NUCLEOTIDE SEQUENCE [LARGE SCALE GENOMIC DNA]</scope>
    <source>
        <strain>IP32953</strain>
    </source>
</reference>
<protein>
    <recommendedName>
        <fullName evidence="1">Bis(5'-nucleosyl)-tetraphosphatase, symmetrical</fullName>
        <ecNumber evidence="1">3.6.1.41</ecNumber>
    </recommendedName>
    <alternativeName>
        <fullName evidence="1">Ap4A hydrolase</fullName>
    </alternativeName>
    <alternativeName>
        <fullName evidence="1">Diadenosine 5',5'''-P1,P4-tetraphosphate pyrophosphohydrolase</fullName>
    </alternativeName>
    <alternativeName>
        <fullName evidence="1">Diadenosine tetraphosphatase</fullName>
    </alternativeName>
</protein>
<evidence type="ECO:0000255" key="1">
    <source>
        <dbReference type="HAMAP-Rule" id="MF_00199"/>
    </source>
</evidence>
<accession>Q66ER0</accession>
<comment type="function">
    <text evidence="1">Hydrolyzes diadenosine 5',5'''-P1,P4-tetraphosphate to yield ADP.</text>
</comment>
<comment type="catalytic activity">
    <reaction evidence="1">
        <text>P(1),P(4)-bis(5'-adenosyl) tetraphosphate + H2O = 2 ADP + 2 H(+)</text>
        <dbReference type="Rhea" id="RHEA:24252"/>
        <dbReference type="ChEBI" id="CHEBI:15377"/>
        <dbReference type="ChEBI" id="CHEBI:15378"/>
        <dbReference type="ChEBI" id="CHEBI:58141"/>
        <dbReference type="ChEBI" id="CHEBI:456216"/>
        <dbReference type="EC" id="3.6.1.41"/>
    </reaction>
</comment>
<comment type="similarity">
    <text evidence="1">Belongs to the Ap4A hydrolase family.</text>
</comment>
<feature type="chain" id="PRO_0000198022" description="Bis(5'-nucleosyl)-tetraphosphatase, symmetrical">
    <location>
        <begin position="1"/>
        <end position="289"/>
    </location>
</feature>